<evidence type="ECO:0000255" key="1">
    <source>
        <dbReference type="HAMAP-Rule" id="MF_01274"/>
    </source>
</evidence>
<dbReference type="EC" id="2.7.1.33" evidence="1"/>
<dbReference type="EMBL" id="AE017194">
    <property type="protein sequence ID" value="AAS39000.1"/>
    <property type="molecule type" value="Genomic_DNA"/>
</dbReference>
<dbReference type="SMR" id="Q73FE2"/>
<dbReference type="KEGG" id="bca:BCE_0064"/>
<dbReference type="HOGENOM" id="CLU_066627_1_0_9"/>
<dbReference type="UniPathway" id="UPA00241">
    <property type="reaction ID" value="UER00352"/>
</dbReference>
<dbReference type="Proteomes" id="UP000002527">
    <property type="component" value="Chromosome"/>
</dbReference>
<dbReference type="GO" id="GO:0005737">
    <property type="term" value="C:cytoplasm"/>
    <property type="evidence" value="ECO:0007669"/>
    <property type="project" value="UniProtKB-SubCell"/>
</dbReference>
<dbReference type="GO" id="GO:0005524">
    <property type="term" value="F:ATP binding"/>
    <property type="evidence" value="ECO:0007669"/>
    <property type="project" value="UniProtKB-UniRule"/>
</dbReference>
<dbReference type="GO" id="GO:0046872">
    <property type="term" value="F:metal ion binding"/>
    <property type="evidence" value="ECO:0007669"/>
    <property type="project" value="UniProtKB-KW"/>
</dbReference>
<dbReference type="GO" id="GO:0004594">
    <property type="term" value="F:pantothenate kinase activity"/>
    <property type="evidence" value="ECO:0007669"/>
    <property type="project" value="UniProtKB-UniRule"/>
</dbReference>
<dbReference type="GO" id="GO:0015937">
    <property type="term" value="P:coenzyme A biosynthetic process"/>
    <property type="evidence" value="ECO:0007669"/>
    <property type="project" value="UniProtKB-UniRule"/>
</dbReference>
<dbReference type="CDD" id="cd24015">
    <property type="entry name" value="ASKHA_NBD_PanK-III"/>
    <property type="match status" value="1"/>
</dbReference>
<dbReference type="Gene3D" id="3.30.420.40">
    <property type="match status" value="2"/>
</dbReference>
<dbReference type="HAMAP" id="MF_01274">
    <property type="entry name" value="Pantothen_kinase_3"/>
    <property type="match status" value="1"/>
</dbReference>
<dbReference type="InterPro" id="IPR043129">
    <property type="entry name" value="ATPase_NBD"/>
</dbReference>
<dbReference type="InterPro" id="IPR004619">
    <property type="entry name" value="Type_III_PanK"/>
</dbReference>
<dbReference type="NCBIfam" id="TIGR00671">
    <property type="entry name" value="baf"/>
    <property type="match status" value="1"/>
</dbReference>
<dbReference type="NCBIfam" id="NF009843">
    <property type="entry name" value="PRK13318.1-1"/>
    <property type="match status" value="1"/>
</dbReference>
<dbReference type="NCBIfam" id="NF009847">
    <property type="entry name" value="PRK13318.1-5"/>
    <property type="match status" value="1"/>
</dbReference>
<dbReference type="NCBIfam" id="NF009848">
    <property type="entry name" value="PRK13318.1-6"/>
    <property type="match status" value="1"/>
</dbReference>
<dbReference type="NCBIfam" id="NF009855">
    <property type="entry name" value="PRK13321.1"/>
    <property type="match status" value="1"/>
</dbReference>
<dbReference type="PANTHER" id="PTHR34265">
    <property type="entry name" value="TYPE III PANTOTHENATE KINASE"/>
    <property type="match status" value="1"/>
</dbReference>
<dbReference type="PANTHER" id="PTHR34265:SF1">
    <property type="entry name" value="TYPE III PANTOTHENATE KINASE"/>
    <property type="match status" value="1"/>
</dbReference>
<dbReference type="Pfam" id="PF03309">
    <property type="entry name" value="Pan_kinase"/>
    <property type="match status" value="1"/>
</dbReference>
<dbReference type="SUPFAM" id="SSF53067">
    <property type="entry name" value="Actin-like ATPase domain"/>
    <property type="match status" value="2"/>
</dbReference>
<protein>
    <recommendedName>
        <fullName evidence="1">Type III pantothenate kinase</fullName>
        <ecNumber evidence="1">2.7.1.33</ecNumber>
    </recommendedName>
    <alternativeName>
        <fullName evidence="1">PanK-III</fullName>
    </alternativeName>
    <alternativeName>
        <fullName evidence="1">Pantothenic acid kinase</fullName>
    </alternativeName>
</protein>
<accession>Q73FE2</accession>
<comment type="function">
    <text evidence="1">Catalyzes the phosphorylation of pantothenate (Pan), the first step in CoA biosynthesis.</text>
</comment>
<comment type="catalytic activity">
    <reaction evidence="1">
        <text>(R)-pantothenate + ATP = (R)-4'-phosphopantothenate + ADP + H(+)</text>
        <dbReference type="Rhea" id="RHEA:16373"/>
        <dbReference type="ChEBI" id="CHEBI:10986"/>
        <dbReference type="ChEBI" id="CHEBI:15378"/>
        <dbReference type="ChEBI" id="CHEBI:29032"/>
        <dbReference type="ChEBI" id="CHEBI:30616"/>
        <dbReference type="ChEBI" id="CHEBI:456216"/>
        <dbReference type="EC" id="2.7.1.33"/>
    </reaction>
</comment>
<comment type="cofactor">
    <cofactor evidence="1">
        <name>NH4(+)</name>
        <dbReference type="ChEBI" id="CHEBI:28938"/>
    </cofactor>
    <cofactor evidence="1">
        <name>K(+)</name>
        <dbReference type="ChEBI" id="CHEBI:29103"/>
    </cofactor>
    <text evidence="1">A monovalent cation. Ammonium or potassium.</text>
</comment>
<comment type="pathway">
    <text evidence="1">Cofactor biosynthesis; coenzyme A biosynthesis; CoA from (R)-pantothenate: step 1/5.</text>
</comment>
<comment type="subunit">
    <text evidence="1">Homodimer.</text>
</comment>
<comment type="subcellular location">
    <subcellularLocation>
        <location evidence="1">Cytoplasm</location>
    </subcellularLocation>
</comment>
<comment type="similarity">
    <text evidence="1">Belongs to the type III pantothenate kinase family.</text>
</comment>
<reference key="1">
    <citation type="journal article" date="2004" name="Nucleic Acids Res.">
        <title>The genome sequence of Bacillus cereus ATCC 10987 reveals metabolic adaptations and a large plasmid related to Bacillus anthracis pXO1.</title>
        <authorList>
            <person name="Rasko D.A."/>
            <person name="Ravel J."/>
            <person name="Oekstad O.A."/>
            <person name="Helgason E."/>
            <person name="Cer R.Z."/>
            <person name="Jiang L."/>
            <person name="Shores K.A."/>
            <person name="Fouts D.E."/>
            <person name="Tourasse N.J."/>
            <person name="Angiuoli S.V."/>
            <person name="Kolonay J.F."/>
            <person name="Nelson W.C."/>
            <person name="Kolstoe A.-B."/>
            <person name="Fraser C.M."/>
            <person name="Read T.D."/>
        </authorList>
    </citation>
    <scope>NUCLEOTIDE SEQUENCE [LARGE SCALE GENOMIC DNA]</scope>
    <source>
        <strain>ATCC 10987 / NRS 248</strain>
    </source>
</reference>
<organism>
    <name type="scientific">Bacillus cereus (strain ATCC 10987 / NRS 248)</name>
    <dbReference type="NCBI Taxonomy" id="222523"/>
    <lineage>
        <taxon>Bacteria</taxon>
        <taxon>Bacillati</taxon>
        <taxon>Bacillota</taxon>
        <taxon>Bacilli</taxon>
        <taxon>Bacillales</taxon>
        <taxon>Bacillaceae</taxon>
        <taxon>Bacillus</taxon>
        <taxon>Bacillus cereus group</taxon>
    </lineage>
</organism>
<keyword id="KW-0067">ATP-binding</keyword>
<keyword id="KW-0173">Coenzyme A biosynthesis</keyword>
<keyword id="KW-0963">Cytoplasm</keyword>
<keyword id="KW-0418">Kinase</keyword>
<keyword id="KW-0479">Metal-binding</keyword>
<keyword id="KW-0547">Nucleotide-binding</keyword>
<keyword id="KW-0630">Potassium</keyword>
<keyword id="KW-0808">Transferase</keyword>
<sequence>MIFVLDVGNTNAVLGVFEEGELRQHWRMETDRHKTEDEYGMLVKQLLEHEGLSFEDVKGIIVSSVVPPIMFALERMCEKYFKIKPLVVGPGIKTGLNIKYENPREVGADRIVNAVAGIHLYGSPLIIVDFGTATTYCYINEEKHYMGGVITPGIMISAEALYSRAAKLPRIEITKPSSVVGKNTVSAMQSGILYGYVGQVEGIVKRMKEEAKQEPKVIATGGLAKLISEESNVIDVVDPFLTLKGLYMLYERNANLQHEKGE</sequence>
<name>COAX_BACC1</name>
<proteinExistence type="inferred from homology"/>
<feature type="chain" id="PRO_0000267492" description="Type III pantothenate kinase">
    <location>
        <begin position="1"/>
        <end position="262"/>
    </location>
</feature>
<feature type="active site" description="Proton acceptor" evidence="1">
    <location>
        <position position="109"/>
    </location>
</feature>
<feature type="binding site" evidence="1">
    <location>
        <begin position="6"/>
        <end position="13"/>
    </location>
    <ligand>
        <name>ATP</name>
        <dbReference type="ChEBI" id="CHEBI:30616"/>
    </ligand>
</feature>
<feature type="binding site" evidence="1">
    <location>
        <position position="100"/>
    </location>
    <ligand>
        <name>substrate</name>
    </ligand>
</feature>
<feature type="binding site" evidence="1">
    <location>
        <begin position="107"/>
        <end position="110"/>
    </location>
    <ligand>
        <name>substrate</name>
    </ligand>
</feature>
<feature type="binding site" evidence="1">
    <location>
        <position position="129"/>
    </location>
    <ligand>
        <name>K(+)</name>
        <dbReference type="ChEBI" id="CHEBI:29103"/>
    </ligand>
</feature>
<feature type="binding site" evidence="1">
    <location>
        <position position="132"/>
    </location>
    <ligand>
        <name>ATP</name>
        <dbReference type="ChEBI" id="CHEBI:30616"/>
    </ligand>
</feature>
<feature type="binding site" evidence="1">
    <location>
        <position position="184"/>
    </location>
    <ligand>
        <name>substrate</name>
    </ligand>
</feature>
<gene>
    <name evidence="1" type="primary">coaX</name>
    <name type="ordered locus">BCE_0064</name>
</gene>